<organism>
    <name type="scientific">Pseudomonas savastanoi pv. phaseolicola (strain 1448A / Race 6)</name>
    <name type="common">Pseudomonas syringae pv. phaseolicola (strain 1448A / Race 6)</name>
    <dbReference type="NCBI Taxonomy" id="264730"/>
    <lineage>
        <taxon>Bacteria</taxon>
        <taxon>Pseudomonadati</taxon>
        <taxon>Pseudomonadota</taxon>
        <taxon>Gammaproteobacteria</taxon>
        <taxon>Pseudomonadales</taxon>
        <taxon>Pseudomonadaceae</taxon>
        <taxon>Pseudomonas</taxon>
    </lineage>
</organism>
<dbReference type="EMBL" id="CP000058">
    <property type="protein sequence ID" value="AAZ35217.1"/>
    <property type="molecule type" value="Genomic_DNA"/>
</dbReference>
<dbReference type="RefSeq" id="WP_002551648.1">
    <property type="nucleotide sequence ID" value="NC_005773.3"/>
</dbReference>
<dbReference type="SMR" id="Q48PI0"/>
<dbReference type="GeneID" id="96216730"/>
<dbReference type="KEGG" id="psp:PSPPH_0386"/>
<dbReference type="eggNOG" id="COG0254">
    <property type="taxonomic scope" value="Bacteria"/>
</dbReference>
<dbReference type="HOGENOM" id="CLU_114306_4_0_6"/>
<dbReference type="Proteomes" id="UP000000551">
    <property type="component" value="Chromosome"/>
</dbReference>
<dbReference type="GO" id="GO:1990904">
    <property type="term" value="C:ribonucleoprotein complex"/>
    <property type="evidence" value="ECO:0007669"/>
    <property type="project" value="UniProtKB-KW"/>
</dbReference>
<dbReference type="GO" id="GO:0005840">
    <property type="term" value="C:ribosome"/>
    <property type="evidence" value="ECO:0007669"/>
    <property type="project" value="UniProtKB-KW"/>
</dbReference>
<dbReference type="GO" id="GO:0046872">
    <property type="term" value="F:metal ion binding"/>
    <property type="evidence" value="ECO:0007669"/>
    <property type="project" value="UniProtKB-KW"/>
</dbReference>
<dbReference type="GO" id="GO:0019843">
    <property type="term" value="F:rRNA binding"/>
    <property type="evidence" value="ECO:0007669"/>
    <property type="project" value="UniProtKB-KW"/>
</dbReference>
<dbReference type="GO" id="GO:0003735">
    <property type="term" value="F:structural constituent of ribosome"/>
    <property type="evidence" value="ECO:0007669"/>
    <property type="project" value="InterPro"/>
</dbReference>
<dbReference type="GO" id="GO:0006412">
    <property type="term" value="P:translation"/>
    <property type="evidence" value="ECO:0007669"/>
    <property type="project" value="UniProtKB-UniRule"/>
</dbReference>
<dbReference type="Gene3D" id="4.10.830.30">
    <property type="entry name" value="Ribosomal protein L31"/>
    <property type="match status" value="1"/>
</dbReference>
<dbReference type="HAMAP" id="MF_00501">
    <property type="entry name" value="Ribosomal_bL31_1"/>
    <property type="match status" value="1"/>
</dbReference>
<dbReference type="InterPro" id="IPR034704">
    <property type="entry name" value="Ribosomal_bL28/bL31-like_sf"/>
</dbReference>
<dbReference type="InterPro" id="IPR002150">
    <property type="entry name" value="Ribosomal_bL31"/>
</dbReference>
<dbReference type="InterPro" id="IPR027491">
    <property type="entry name" value="Ribosomal_bL31_A"/>
</dbReference>
<dbReference type="InterPro" id="IPR042105">
    <property type="entry name" value="Ribosomal_bL31_sf"/>
</dbReference>
<dbReference type="NCBIfam" id="TIGR00105">
    <property type="entry name" value="L31"/>
    <property type="match status" value="1"/>
</dbReference>
<dbReference type="NCBIfam" id="NF000612">
    <property type="entry name" value="PRK00019.1"/>
    <property type="match status" value="1"/>
</dbReference>
<dbReference type="PANTHER" id="PTHR33280">
    <property type="entry name" value="50S RIBOSOMAL PROTEIN L31, CHLOROPLASTIC"/>
    <property type="match status" value="1"/>
</dbReference>
<dbReference type="PANTHER" id="PTHR33280:SF6">
    <property type="entry name" value="LARGE RIBOSOMAL SUBUNIT PROTEIN BL31A"/>
    <property type="match status" value="1"/>
</dbReference>
<dbReference type="Pfam" id="PF01197">
    <property type="entry name" value="Ribosomal_L31"/>
    <property type="match status" value="1"/>
</dbReference>
<dbReference type="PRINTS" id="PR01249">
    <property type="entry name" value="RIBOSOMALL31"/>
</dbReference>
<dbReference type="SUPFAM" id="SSF143800">
    <property type="entry name" value="L28p-like"/>
    <property type="match status" value="1"/>
</dbReference>
<dbReference type="PROSITE" id="PS01143">
    <property type="entry name" value="RIBOSOMAL_L31"/>
    <property type="match status" value="1"/>
</dbReference>
<feature type="chain" id="PRO_0000259212" description="Large ribosomal subunit protein bL31">
    <location>
        <begin position="1"/>
        <end position="73"/>
    </location>
</feature>
<feature type="binding site" evidence="1">
    <location>
        <position position="16"/>
    </location>
    <ligand>
        <name>Zn(2+)</name>
        <dbReference type="ChEBI" id="CHEBI:29105"/>
    </ligand>
</feature>
<feature type="binding site" evidence="1">
    <location>
        <position position="18"/>
    </location>
    <ligand>
        <name>Zn(2+)</name>
        <dbReference type="ChEBI" id="CHEBI:29105"/>
    </ligand>
</feature>
<feature type="binding site" evidence="1">
    <location>
        <position position="37"/>
    </location>
    <ligand>
        <name>Zn(2+)</name>
        <dbReference type="ChEBI" id="CHEBI:29105"/>
    </ligand>
</feature>
<feature type="binding site" evidence="1">
    <location>
        <position position="40"/>
    </location>
    <ligand>
        <name>Zn(2+)</name>
        <dbReference type="ChEBI" id="CHEBI:29105"/>
    </ligand>
</feature>
<evidence type="ECO:0000255" key="1">
    <source>
        <dbReference type="HAMAP-Rule" id="MF_00501"/>
    </source>
</evidence>
<evidence type="ECO:0000305" key="2"/>
<proteinExistence type="inferred from homology"/>
<comment type="function">
    <text evidence="1">Binds the 23S rRNA.</text>
</comment>
<comment type="cofactor">
    <cofactor evidence="1">
        <name>Zn(2+)</name>
        <dbReference type="ChEBI" id="CHEBI:29105"/>
    </cofactor>
    <text evidence="1">Binds 1 zinc ion per subunit.</text>
</comment>
<comment type="subunit">
    <text evidence="1">Part of the 50S ribosomal subunit.</text>
</comment>
<comment type="similarity">
    <text evidence="1">Belongs to the bacterial ribosomal protein bL31 family. Type A subfamily.</text>
</comment>
<accession>Q48PI0</accession>
<keyword id="KW-0479">Metal-binding</keyword>
<keyword id="KW-0687">Ribonucleoprotein</keyword>
<keyword id="KW-0689">Ribosomal protein</keyword>
<keyword id="KW-0694">RNA-binding</keyword>
<keyword id="KW-0699">rRNA-binding</keyword>
<keyword id="KW-0862">Zinc</keyword>
<gene>
    <name evidence="1" type="primary">rpmE</name>
    <name type="ordered locus">PSPPH_0386</name>
</gene>
<reference key="1">
    <citation type="journal article" date="2005" name="J. Bacteriol.">
        <title>Whole-genome sequence analysis of Pseudomonas syringae pv. phaseolicola 1448A reveals divergence among pathovars in genes involved in virulence and transposition.</title>
        <authorList>
            <person name="Joardar V."/>
            <person name="Lindeberg M."/>
            <person name="Jackson R.W."/>
            <person name="Selengut J."/>
            <person name="Dodson R."/>
            <person name="Brinkac L.M."/>
            <person name="Daugherty S.C."/>
            <person name="DeBoy R.T."/>
            <person name="Durkin A.S."/>
            <person name="Gwinn Giglio M."/>
            <person name="Madupu R."/>
            <person name="Nelson W.C."/>
            <person name="Rosovitz M.J."/>
            <person name="Sullivan S.A."/>
            <person name="Crabtree J."/>
            <person name="Creasy T."/>
            <person name="Davidsen T.M."/>
            <person name="Haft D.H."/>
            <person name="Zafar N."/>
            <person name="Zhou L."/>
            <person name="Halpin R."/>
            <person name="Holley T."/>
            <person name="Khouri H.M."/>
            <person name="Feldblyum T.V."/>
            <person name="White O."/>
            <person name="Fraser C.M."/>
            <person name="Chatterjee A.K."/>
            <person name="Cartinhour S."/>
            <person name="Schneider D."/>
            <person name="Mansfield J.W."/>
            <person name="Collmer A."/>
            <person name="Buell R."/>
        </authorList>
    </citation>
    <scope>NUCLEOTIDE SEQUENCE [LARGE SCALE GENOMIC DNA]</scope>
    <source>
        <strain>1448A / Race 6</strain>
    </source>
</reference>
<sequence>MKADIHPVYEAIDATCSCGNVIKTRSTLAAPLSLDVCNECHPFYTGKQKTLDVGGRVDKFKSRFGAFGATKAK</sequence>
<protein>
    <recommendedName>
        <fullName evidence="1">Large ribosomal subunit protein bL31</fullName>
    </recommendedName>
    <alternativeName>
        <fullName evidence="2">50S ribosomal protein L31</fullName>
    </alternativeName>
</protein>
<name>RL31_PSE14</name>